<gene>
    <name evidence="1" type="primary">rps5</name>
    <name type="ordered locus">MTH_23</name>
</gene>
<keyword id="KW-1185">Reference proteome</keyword>
<keyword id="KW-0687">Ribonucleoprotein</keyword>
<keyword id="KW-0689">Ribosomal protein</keyword>
<keyword id="KW-0694">RNA-binding</keyword>
<keyword id="KW-0699">rRNA-binding</keyword>
<name>RS5_METTH</name>
<dbReference type="EMBL" id="AE000666">
    <property type="protein sequence ID" value="AAB84532.1"/>
    <property type="molecule type" value="Genomic_DNA"/>
</dbReference>
<dbReference type="PIR" id="E69128">
    <property type="entry name" value="E69128"/>
</dbReference>
<dbReference type="SMR" id="O26131"/>
<dbReference type="FunCoup" id="O26131">
    <property type="interactions" value="183"/>
</dbReference>
<dbReference type="STRING" id="187420.MTH_23"/>
<dbReference type="PaxDb" id="187420-MTH_23"/>
<dbReference type="EnsemblBacteria" id="AAB84532">
    <property type="protein sequence ID" value="AAB84532"/>
    <property type="gene ID" value="MTH_23"/>
</dbReference>
<dbReference type="KEGG" id="mth:MTH_23"/>
<dbReference type="PATRIC" id="fig|187420.15.peg.23"/>
<dbReference type="HOGENOM" id="CLU_065898_0_1_2"/>
<dbReference type="InParanoid" id="O26131"/>
<dbReference type="Proteomes" id="UP000005223">
    <property type="component" value="Chromosome"/>
</dbReference>
<dbReference type="GO" id="GO:0022627">
    <property type="term" value="C:cytosolic small ribosomal subunit"/>
    <property type="evidence" value="ECO:0007669"/>
    <property type="project" value="TreeGrafter"/>
</dbReference>
<dbReference type="GO" id="GO:0019843">
    <property type="term" value="F:rRNA binding"/>
    <property type="evidence" value="ECO:0007669"/>
    <property type="project" value="UniProtKB-UniRule"/>
</dbReference>
<dbReference type="GO" id="GO:0003735">
    <property type="term" value="F:structural constituent of ribosome"/>
    <property type="evidence" value="ECO:0007669"/>
    <property type="project" value="InterPro"/>
</dbReference>
<dbReference type="GO" id="GO:0006412">
    <property type="term" value="P:translation"/>
    <property type="evidence" value="ECO:0007669"/>
    <property type="project" value="UniProtKB-UniRule"/>
</dbReference>
<dbReference type="FunFam" id="3.30.160.20:FF:000002">
    <property type="entry name" value="40S ribosomal protein S2"/>
    <property type="match status" value="1"/>
</dbReference>
<dbReference type="FunFam" id="3.30.230.10:FF:000004">
    <property type="entry name" value="40S ribosomal protein S2"/>
    <property type="match status" value="1"/>
</dbReference>
<dbReference type="Gene3D" id="3.30.160.20">
    <property type="match status" value="1"/>
</dbReference>
<dbReference type="Gene3D" id="3.30.230.10">
    <property type="match status" value="1"/>
</dbReference>
<dbReference type="HAMAP" id="MF_01307_A">
    <property type="entry name" value="Ribosomal_uS5_A"/>
    <property type="match status" value="1"/>
</dbReference>
<dbReference type="InterPro" id="IPR020568">
    <property type="entry name" value="Ribosomal_Su5_D2-typ_SF"/>
</dbReference>
<dbReference type="InterPro" id="IPR000851">
    <property type="entry name" value="Ribosomal_uS5"/>
</dbReference>
<dbReference type="InterPro" id="IPR047866">
    <property type="entry name" value="Ribosomal_uS5_arc"/>
</dbReference>
<dbReference type="InterPro" id="IPR005324">
    <property type="entry name" value="Ribosomal_uS5_C"/>
</dbReference>
<dbReference type="InterPro" id="IPR005711">
    <property type="entry name" value="Ribosomal_uS5_euk/arc"/>
</dbReference>
<dbReference type="InterPro" id="IPR013810">
    <property type="entry name" value="Ribosomal_uS5_N"/>
</dbReference>
<dbReference type="InterPro" id="IPR018192">
    <property type="entry name" value="Ribosomal_uS5_N_CS"/>
</dbReference>
<dbReference type="InterPro" id="IPR014721">
    <property type="entry name" value="Ribsml_uS5_D2-typ_fold_subgr"/>
</dbReference>
<dbReference type="NCBIfam" id="NF003125">
    <property type="entry name" value="PRK04044.1"/>
    <property type="match status" value="1"/>
</dbReference>
<dbReference type="NCBIfam" id="TIGR01020">
    <property type="entry name" value="uS5_euk_arch"/>
    <property type="match status" value="1"/>
</dbReference>
<dbReference type="PANTHER" id="PTHR13718:SF4">
    <property type="entry name" value="40S RIBOSOMAL PROTEIN S2"/>
    <property type="match status" value="1"/>
</dbReference>
<dbReference type="PANTHER" id="PTHR13718">
    <property type="entry name" value="RIBOSOMAL S SUBUNIT"/>
    <property type="match status" value="1"/>
</dbReference>
<dbReference type="Pfam" id="PF00333">
    <property type="entry name" value="Ribosomal_S5"/>
    <property type="match status" value="1"/>
</dbReference>
<dbReference type="Pfam" id="PF03719">
    <property type="entry name" value="Ribosomal_S5_C"/>
    <property type="match status" value="1"/>
</dbReference>
<dbReference type="SUPFAM" id="SSF54768">
    <property type="entry name" value="dsRNA-binding domain-like"/>
    <property type="match status" value="1"/>
</dbReference>
<dbReference type="SUPFAM" id="SSF54211">
    <property type="entry name" value="Ribosomal protein S5 domain 2-like"/>
    <property type="match status" value="1"/>
</dbReference>
<dbReference type="PROSITE" id="PS00585">
    <property type="entry name" value="RIBOSOMAL_S5"/>
    <property type="match status" value="1"/>
</dbReference>
<dbReference type="PROSITE" id="PS50881">
    <property type="entry name" value="S5_DSRBD"/>
    <property type="match status" value="1"/>
</dbReference>
<sequence>MIMNFNMEEWEPRTQLGRLVKEGVITSIDEIFEEGHPIMELEIIDALLPDLEEEVIDVNLVQRMHKSGRKVNFRVIVAVGNKDGYVGLGQGKAREVGPAIRKAVDDAKFNIIKVRRGCGDWGCVCGREHTVPFKVSGKSGSVRVTLIPAPGGVGLAIGDVGKTIMRLAGIDDVWSHTRGQTQTTVNFARATFDALKQLSKVKASEKDLKNLGVCST</sequence>
<evidence type="ECO:0000255" key="1">
    <source>
        <dbReference type="HAMAP-Rule" id="MF_01307"/>
    </source>
</evidence>
<evidence type="ECO:0000305" key="2"/>
<reference key="1">
    <citation type="journal article" date="1997" name="J. Bacteriol.">
        <title>Complete genome sequence of Methanobacterium thermoautotrophicum deltaH: functional analysis and comparative genomics.</title>
        <authorList>
            <person name="Smith D.R."/>
            <person name="Doucette-Stamm L.A."/>
            <person name="Deloughery C."/>
            <person name="Lee H.-M."/>
            <person name="Dubois J."/>
            <person name="Aldredge T."/>
            <person name="Bashirzadeh R."/>
            <person name="Blakely D."/>
            <person name="Cook R."/>
            <person name="Gilbert K."/>
            <person name="Harrison D."/>
            <person name="Hoang L."/>
            <person name="Keagle P."/>
            <person name="Lumm W."/>
            <person name="Pothier B."/>
            <person name="Qiu D."/>
            <person name="Spadafora R."/>
            <person name="Vicare R."/>
            <person name="Wang Y."/>
            <person name="Wierzbowski J."/>
            <person name="Gibson R."/>
            <person name="Jiwani N."/>
            <person name="Caruso A."/>
            <person name="Bush D."/>
            <person name="Safer H."/>
            <person name="Patwell D."/>
            <person name="Prabhakar S."/>
            <person name="McDougall S."/>
            <person name="Shimer G."/>
            <person name="Goyal A."/>
            <person name="Pietrovski S."/>
            <person name="Church G.M."/>
            <person name="Daniels C.J."/>
            <person name="Mao J.-I."/>
            <person name="Rice P."/>
            <person name="Noelling J."/>
            <person name="Reeve J.N."/>
        </authorList>
    </citation>
    <scope>NUCLEOTIDE SEQUENCE [LARGE SCALE GENOMIC DNA]</scope>
    <source>
        <strain>ATCC 29096 / DSM 1053 / JCM 10044 / NBRC 100330 / Delta H</strain>
    </source>
</reference>
<feature type="chain" id="PRO_0000131653" description="Small ribosomal subunit protein uS5">
    <location>
        <begin position="1"/>
        <end position="216"/>
    </location>
</feature>
<feature type="domain" description="S5 DRBM" evidence="1">
    <location>
        <begin position="51"/>
        <end position="114"/>
    </location>
</feature>
<comment type="function">
    <text evidence="1">With S4 and S12 plays an important role in translational accuracy.</text>
</comment>
<comment type="subunit">
    <text evidence="1">Part of the 30S ribosomal subunit. Contacts protein S4.</text>
</comment>
<comment type="domain">
    <text>The N-terminal domain interacts with the head of the 30S subunit; the C-terminal domain interacts with the body and contacts protein S4. The interaction surface between S4 and S5 is involved in control of translational fidelity.</text>
</comment>
<comment type="similarity">
    <text evidence="1">Belongs to the universal ribosomal protein uS5 family.</text>
</comment>
<proteinExistence type="inferred from homology"/>
<organism>
    <name type="scientific">Methanothermobacter thermautotrophicus (strain ATCC 29096 / DSM 1053 / JCM 10044 / NBRC 100330 / Delta H)</name>
    <name type="common">Methanobacterium thermoautotrophicum</name>
    <dbReference type="NCBI Taxonomy" id="187420"/>
    <lineage>
        <taxon>Archaea</taxon>
        <taxon>Methanobacteriati</taxon>
        <taxon>Methanobacteriota</taxon>
        <taxon>Methanomada group</taxon>
        <taxon>Methanobacteria</taxon>
        <taxon>Methanobacteriales</taxon>
        <taxon>Methanobacteriaceae</taxon>
        <taxon>Methanothermobacter</taxon>
    </lineage>
</organism>
<protein>
    <recommendedName>
        <fullName evidence="1">Small ribosomal subunit protein uS5</fullName>
    </recommendedName>
    <alternativeName>
        <fullName evidence="2">30S ribosomal protein S5</fullName>
    </alternativeName>
</protein>
<accession>O26131</accession>